<organism>
    <name type="scientific">Nematostella vectensis</name>
    <name type="common">Starlet sea anemone</name>
    <dbReference type="NCBI Taxonomy" id="45351"/>
    <lineage>
        <taxon>Eukaryota</taxon>
        <taxon>Metazoa</taxon>
        <taxon>Cnidaria</taxon>
        <taxon>Anthozoa</taxon>
        <taxon>Hexacorallia</taxon>
        <taxon>Actiniaria</taxon>
        <taxon>Edwardsiidae</taxon>
        <taxon>Nematostella</taxon>
    </lineage>
</organism>
<accession>A7SEP9</accession>
<keyword id="KW-0479">Metal-binding</keyword>
<keyword id="KW-0539">Nucleus</keyword>
<keyword id="KW-1185">Reference proteome</keyword>
<keyword id="KW-0687">Ribonucleoprotein</keyword>
<keyword id="KW-0694">RNA-binding</keyword>
<keyword id="KW-0862">Zinc</keyword>
<keyword id="KW-0863">Zinc-finger</keyword>
<feature type="chain" id="PRO_0000414265" description="U1 small nuclear ribonucleoprotein C">
    <location>
        <begin position="1"/>
        <end position="138"/>
    </location>
</feature>
<feature type="zinc finger region" description="Matrin-type" evidence="1">
    <location>
        <begin position="4"/>
        <end position="36"/>
    </location>
</feature>
<feature type="region of interest" description="Disordered" evidence="2">
    <location>
        <begin position="58"/>
        <end position="138"/>
    </location>
</feature>
<feature type="compositionally biased region" description="Pro residues" evidence="2">
    <location>
        <begin position="67"/>
        <end position="109"/>
    </location>
</feature>
<feature type="compositionally biased region" description="Low complexity" evidence="2">
    <location>
        <begin position="113"/>
        <end position="138"/>
    </location>
</feature>
<protein>
    <recommendedName>
        <fullName evidence="1">U1 small nuclear ribonucleoprotein C</fullName>
        <shortName evidence="1">U1 snRNP C</shortName>
        <shortName evidence="1">U1-C</shortName>
        <shortName evidence="1">U1C</shortName>
    </recommendedName>
</protein>
<sequence length="138" mass="15217">MPKYYCDYCDTFLTHDSPSVRKTHNNGRKHKENVRFYYQKWMEEQAQTLIDQTTAAFQSKPNSQMPPNAPPGLMPPPGMLPPPGGMPPGRMPPQGLPFPPPGPIPPPPGAGGMRPPHGQMHMGGPRPQMGRPPMSLRS</sequence>
<dbReference type="EMBL" id="DS469638">
    <property type="protein sequence ID" value="EDO37851.1"/>
    <property type="molecule type" value="Genomic_DNA"/>
</dbReference>
<dbReference type="SMR" id="A7SEP9"/>
<dbReference type="STRING" id="45351.A7SEP9"/>
<dbReference type="EnsemblMetazoa" id="EDO37851">
    <property type="protein sequence ID" value="EDO37851"/>
    <property type="gene ID" value="NEMVEDRAFT_v1g244745"/>
</dbReference>
<dbReference type="KEGG" id="nve:5509391"/>
<dbReference type="eggNOG" id="KOG3454">
    <property type="taxonomic scope" value="Eukaryota"/>
</dbReference>
<dbReference type="HOGENOM" id="CLU_079697_3_1_1"/>
<dbReference type="InParanoid" id="A7SEP9"/>
<dbReference type="OMA" id="GWKFREN"/>
<dbReference type="OrthoDB" id="76567at2759"/>
<dbReference type="Proteomes" id="UP000001593">
    <property type="component" value="Unassembled WGS sequence"/>
</dbReference>
<dbReference type="GO" id="GO:0000243">
    <property type="term" value="C:commitment complex"/>
    <property type="evidence" value="ECO:0007669"/>
    <property type="project" value="UniProtKB-UniRule"/>
</dbReference>
<dbReference type="GO" id="GO:0005685">
    <property type="term" value="C:U1 snRNP"/>
    <property type="evidence" value="ECO:0000318"/>
    <property type="project" value="GO_Central"/>
</dbReference>
<dbReference type="GO" id="GO:0071004">
    <property type="term" value="C:U2-type prespliceosome"/>
    <property type="evidence" value="ECO:0007669"/>
    <property type="project" value="UniProtKB-UniRule"/>
</dbReference>
<dbReference type="GO" id="GO:0003729">
    <property type="term" value="F:mRNA binding"/>
    <property type="evidence" value="ECO:0007669"/>
    <property type="project" value="UniProtKB-UniRule"/>
</dbReference>
<dbReference type="GO" id="GO:0030627">
    <property type="term" value="F:pre-mRNA 5'-splice site binding"/>
    <property type="evidence" value="ECO:0000318"/>
    <property type="project" value="GO_Central"/>
</dbReference>
<dbReference type="GO" id="GO:0030619">
    <property type="term" value="F:U1 snRNA binding"/>
    <property type="evidence" value="ECO:0007669"/>
    <property type="project" value="UniProtKB-UniRule"/>
</dbReference>
<dbReference type="GO" id="GO:0008270">
    <property type="term" value="F:zinc ion binding"/>
    <property type="evidence" value="ECO:0007669"/>
    <property type="project" value="UniProtKB-UniRule"/>
</dbReference>
<dbReference type="GO" id="GO:0000395">
    <property type="term" value="P:mRNA 5'-splice site recognition"/>
    <property type="evidence" value="ECO:0000318"/>
    <property type="project" value="GO_Central"/>
</dbReference>
<dbReference type="GO" id="GO:0000387">
    <property type="term" value="P:spliceosomal snRNP assembly"/>
    <property type="evidence" value="ECO:0007669"/>
    <property type="project" value="UniProtKB-UniRule"/>
</dbReference>
<dbReference type="FunFam" id="3.30.160.60:FF:000059">
    <property type="entry name" value="U1 small nuclear ribonucleoprotein C"/>
    <property type="match status" value="1"/>
</dbReference>
<dbReference type="Gene3D" id="3.30.160.60">
    <property type="entry name" value="Classic Zinc Finger"/>
    <property type="match status" value="1"/>
</dbReference>
<dbReference type="HAMAP" id="MF_03153">
    <property type="entry name" value="U1_C"/>
    <property type="match status" value="1"/>
</dbReference>
<dbReference type="InterPro" id="IPR000690">
    <property type="entry name" value="Matrin/U1-C_Znf_C2H2"/>
</dbReference>
<dbReference type="InterPro" id="IPR003604">
    <property type="entry name" value="Matrin/U1-like-C_Znf_C2H2"/>
</dbReference>
<dbReference type="InterPro" id="IPR013085">
    <property type="entry name" value="U1-CZ_Znf_C2H2"/>
</dbReference>
<dbReference type="InterPro" id="IPR017340">
    <property type="entry name" value="U1_snRNP-C"/>
</dbReference>
<dbReference type="InterPro" id="IPR036236">
    <property type="entry name" value="Znf_C2H2_sf"/>
</dbReference>
<dbReference type="PANTHER" id="PTHR31148">
    <property type="entry name" value="U1 SMALL NUCLEAR RIBONUCLEOPROTEIN C"/>
    <property type="match status" value="1"/>
</dbReference>
<dbReference type="PANTHER" id="PTHR31148:SF1">
    <property type="entry name" value="U1 SMALL NUCLEAR RIBONUCLEOPROTEIN C"/>
    <property type="match status" value="1"/>
</dbReference>
<dbReference type="Pfam" id="PF06220">
    <property type="entry name" value="zf-U1"/>
    <property type="match status" value="1"/>
</dbReference>
<dbReference type="PIRSF" id="PIRSF037969">
    <property type="entry name" value="U1_snRNP-C"/>
    <property type="match status" value="1"/>
</dbReference>
<dbReference type="SMART" id="SM00451">
    <property type="entry name" value="ZnF_U1"/>
    <property type="match status" value="1"/>
</dbReference>
<dbReference type="SUPFAM" id="SSF57667">
    <property type="entry name" value="beta-beta-alpha zinc fingers"/>
    <property type="match status" value="1"/>
</dbReference>
<dbReference type="PROSITE" id="PS50171">
    <property type="entry name" value="ZF_MATRIN"/>
    <property type="match status" value="1"/>
</dbReference>
<proteinExistence type="inferred from homology"/>
<name>RU1C_NEMVE</name>
<gene>
    <name type="ORF">v1g244745</name>
</gene>
<evidence type="ECO:0000255" key="1">
    <source>
        <dbReference type="HAMAP-Rule" id="MF_03153"/>
    </source>
</evidence>
<evidence type="ECO:0000256" key="2">
    <source>
        <dbReference type="SAM" id="MobiDB-lite"/>
    </source>
</evidence>
<reference key="1">
    <citation type="journal article" date="2007" name="Science">
        <title>Sea anemone genome reveals ancestral eumetazoan gene repertoire and genomic organization.</title>
        <authorList>
            <person name="Putnam N.H."/>
            <person name="Srivastava M."/>
            <person name="Hellsten U."/>
            <person name="Dirks B."/>
            <person name="Chapman J."/>
            <person name="Salamov A."/>
            <person name="Terry A."/>
            <person name="Shapiro H."/>
            <person name="Lindquist E."/>
            <person name="Kapitonov V.V."/>
            <person name="Jurka J."/>
            <person name="Genikhovich G."/>
            <person name="Grigoriev I.V."/>
            <person name="Lucas S.M."/>
            <person name="Steele R.E."/>
            <person name="Finnerty J.R."/>
            <person name="Technau U."/>
            <person name="Martindale M.Q."/>
            <person name="Rokhsar D.S."/>
        </authorList>
    </citation>
    <scope>NUCLEOTIDE SEQUENCE [LARGE SCALE GENOMIC DNA]</scope>
    <source>
        <strain>CH2 X CH6</strain>
    </source>
</reference>
<comment type="function">
    <text evidence="1">Component of the spliceosomal U1 snRNP, which is essential for recognition of the pre-mRNA 5' splice-site and the subsequent assembly of the spliceosome. U1-C is directly involved in initial 5' splice-site recognition for both constitutive and regulated alternative splicing. The interaction with the 5' splice-site seems to precede base-pairing between the pre-mRNA and the U1 snRNA. Stimulates commitment or early (E) complex formation by stabilizing the base pairing of the 5' end of the U1 snRNA and the 5' splice-site region.</text>
</comment>
<comment type="subunit">
    <text evidence="1">U1 snRNP is composed of the 7 core Sm proteins B/B', D1, D2, D3, E, F and G that assemble in a heptameric protein ring on the Sm site of the small nuclear RNA to form the core snRNP, and at least 3 U1 snRNP-specific proteins U1-70K, U1-A and U1-C. U1-C interacts with U1 snRNA and the 5' splice-site region of the pre-mRNA.</text>
</comment>
<comment type="subcellular location">
    <subcellularLocation>
        <location evidence="1">Nucleus</location>
    </subcellularLocation>
</comment>
<comment type="similarity">
    <text evidence="1">Belongs to the U1 small nuclear ribonucleoprotein C family.</text>
</comment>